<dbReference type="EC" id="2.7.1.26" evidence="1"/>
<dbReference type="EC" id="2.7.7.2" evidence="1"/>
<dbReference type="EMBL" id="M10428">
    <property type="protein sequence ID" value="AAA24605.1"/>
    <property type="molecule type" value="Genomic_DNA"/>
</dbReference>
<dbReference type="EMBL" id="U00096">
    <property type="protein sequence ID" value="AAC73136.1"/>
    <property type="molecule type" value="Genomic_DNA"/>
</dbReference>
<dbReference type="EMBL" id="AP009048">
    <property type="protein sequence ID" value="BAB96594.2"/>
    <property type="molecule type" value="Genomic_DNA"/>
</dbReference>
<dbReference type="PIR" id="A64723">
    <property type="entry name" value="QQECIL"/>
</dbReference>
<dbReference type="RefSeq" id="NP_414566.1">
    <property type="nucleotide sequence ID" value="NC_000913.3"/>
</dbReference>
<dbReference type="RefSeq" id="WP_000767329.1">
    <property type="nucleotide sequence ID" value="NZ_STEB01000010.1"/>
</dbReference>
<dbReference type="SMR" id="P0AG40"/>
<dbReference type="BioGRID" id="4261848">
    <property type="interactions" value="13"/>
</dbReference>
<dbReference type="DIP" id="DIP-35789N"/>
<dbReference type="FunCoup" id="P0AG40">
    <property type="interactions" value="558"/>
</dbReference>
<dbReference type="IntAct" id="P0AG40">
    <property type="interactions" value="10"/>
</dbReference>
<dbReference type="STRING" id="511145.b0025"/>
<dbReference type="MoonProt" id="P0AG40"/>
<dbReference type="jPOST" id="P0AG40"/>
<dbReference type="PaxDb" id="511145-b0025"/>
<dbReference type="EnsemblBacteria" id="AAC73136">
    <property type="protein sequence ID" value="AAC73136"/>
    <property type="gene ID" value="b0025"/>
</dbReference>
<dbReference type="GeneID" id="93777411"/>
<dbReference type="GeneID" id="949129"/>
<dbReference type="KEGG" id="ecj:JW0023"/>
<dbReference type="KEGG" id="eco:b0025"/>
<dbReference type="KEGG" id="ecoc:C3026_00120"/>
<dbReference type="PATRIC" id="fig|1411691.4.peg.2260"/>
<dbReference type="EchoBASE" id="EB1071"/>
<dbReference type="eggNOG" id="COG0196">
    <property type="taxonomic scope" value="Bacteria"/>
</dbReference>
<dbReference type="HOGENOM" id="CLU_048437_0_1_6"/>
<dbReference type="InParanoid" id="P0AG40"/>
<dbReference type="OMA" id="HRGHQAI"/>
<dbReference type="OrthoDB" id="9803667at2"/>
<dbReference type="PhylomeDB" id="P0AG40"/>
<dbReference type="BioCyc" id="EcoCyc:RIBF-MONOMER"/>
<dbReference type="BioCyc" id="MetaCyc:RIBF-MONOMER"/>
<dbReference type="BRENDA" id="2.7.7.2">
    <property type="organism ID" value="2026"/>
</dbReference>
<dbReference type="UniPathway" id="UPA00276">
    <property type="reaction ID" value="UER00406"/>
</dbReference>
<dbReference type="UniPathway" id="UPA00277">
    <property type="reaction ID" value="UER00407"/>
</dbReference>
<dbReference type="PRO" id="PR:P0AG40"/>
<dbReference type="Proteomes" id="UP000000625">
    <property type="component" value="Chromosome"/>
</dbReference>
<dbReference type="GO" id="GO:0005524">
    <property type="term" value="F:ATP binding"/>
    <property type="evidence" value="ECO:0007669"/>
    <property type="project" value="UniProtKB-KW"/>
</dbReference>
<dbReference type="GO" id="GO:0003919">
    <property type="term" value="F:FMN adenylyltransferase activity"/>
    <property type="evidence" value="ECO:0000316"/>
    <property type="project" value="EcoCyc"/>
</dbReference>
<dbReference type="GO" id="GO:0008531">
    <property type="term" value="F:riboflavin kinase activity"/>
    <property type="evidence" value="ECO:0000316"/>
    <property type="project" value="EcoCyc"/>
</dbReference>
<dbReference type="GO" id="GO:0006747">
    <property type="term" value="P:FAD biosynthetic process"/>
    <property type="evidence" value="ECO:0007669"/>
    <property type="project" value="UniProtKB-UniPathway"/>
</dbReference>
<dbReference type="GO" id="GO:0009398">
    <property type="term" value="P:FMN biosynthetic process"/>
    <property type="evidence" value="ECO:0000318"/>
    <property type="project" value="GO_Central"/>
</dbReference>
<dbReference type="GO" id="GO:0009231">
    <property type="term" value="P:riboflavin biosynthetic process"/>
    <property type="evidence" value="ECO:0007669"/>
    <property type="project" value="InterPro"/>
</dbReference>
<dbReference type="GO" id="GO:0006771">
    <property type="term" value="P:riboflavin metabolic process"/>
    <property type="evidence" value="ECO:0000318"/>
    <property type="project" value="GO_Central"/>
</dbReference>
<dbReference type="CDD" id="cd02064">
    <property type="entry name" value="FAD_synthetase_N"/>
    <property type="match status" value="1"/>
</dbReference>
<dbReference type="FunFam" id="2.40.30.30:FF:000001">
    <property type="entry name" value="Riboflavin biosynthesis protein"/>
    <property type="match status" value="1"/>
</dbReference>
<dbReference type="FunFam" id="3.40.50.620:FF:000021">
    <property type="entry name" value="Riboflavin biosynthesis protein"/>
    <property type="match status" value="1"/>
</dbReference>
<dbReference type="Gene3D" id="3.40.50.620">
    <property type="entry name" value="HUPs"/>
    <property type="match status" value="1"/>
</dbReference>
<dbReference type="Gene3D" id="2.40.30.30">
    <property type="entry name" value="Riboflavin kinase-like"/>
    <property type="match status" value="1"/>
</dbReference>
<dbReference type="InterPro" id="IPR015864">
    <property type="entry name" value="FAD_synthase"/>
</dbReference>
<dbReference type="InterPro" id="IPR023468">
    <property type="entry name" value="Riboflavin_kinase"/>
</dbReference>
<dbReference type="InterPro" id="IPR002606">
    <property type="entry name" value="Riboflavin_kinase_bac"/>
</dbReference>
<dbReference type="InterPro" id="IPR015865">
    <property type="entry name" value="Riboflavin_kinase_bac/euk"/>
</dbReference>
<dbReference type="InterPro" id="IPR023465">
    <property type="entry name" value="Riboflavin_kinase_dom_sf"/>
</dbReference>
<dbReference type="InterPro" id="IPR014729">
    <property type="entry name" value="Rossmann-like_a/b/a_fold"/>
</dbReference>
<dbReference type="NCBIfam" id="NF004159">
    <property type="entry name" value="PRK05627.1-2"/>
    <property type="match status" value="1"/>
</dbReference>
<dbReference type="NCBIfam" id="NF004160">
    <property type="entry name" value="PRK05627.1-3"/>
    <property type="match status" value="1"/>
</dbReference>
<dbReference type="NCBIfam" id="NF004162">
    <property type="entry name" value="PRK05627.1-5"/>
    <property type="match status" value="1"/>
</dbReference>
<dbReference type="NCBIfam" id="NF004163">
    <property type="entry name" value="PRK05627.1-6"/>
    <property type="match status" value="1"/>
</dbReference>
<dbReference type="NCBIfam" id="TIGR00083">
    <property type="entry name" value="ribF"/>
    <property type="match status" value="1"/>
</dbReference>
<dbReference type="PANTHER" id="PTHR22749:SF6">
    <property type="entry name" value="RIBOFLAVIN KINASE"/>
    <property type="match status" value="1"/>
</dbReference>
<dbReference type="PANTHER" id="PTHR22749">
    <property type="entry name" value="RIBOFLAVIN KINASE/FMN ADENYLYLTRANSFERASE"/>
    <property type="match status" value="1"/>
</dbReference>
<dbReference type="Pfam" id="PF06574">
    <property type="entry name" value="FAD_syn"/>
    <property type="match status" value="1"/>
</dbReference>
<dbReference type="Pfam" id="PF01687">
    <property type="entry name" value="Flavokinase"/>
    <property type="match status" value="1"/>
</dbReference>
<dbReference type="PIRSF" id="PIRSF004491">
    <property type="entry name" value="FAD_Synth"/>
    <property type="match status" value="1"/>
</dbReference>
<dbReference type="SMART" id="SM00904">
    <property type="entry name" value="Flavokinase"/>
    <property type="match status" value="1"/>
</dbReference>
<dbReference type="SUPFAM" id="SSF52374">
    <property type="entry name" value="Nucleotidylyl transferase"/>
    <property type="match status" value="1"/>
</dbReference>
<dbReference type="SUPFAM" id="SSF82114">
    <property type="entry name" value="Riboflavin kinase-like"/>
    <property type="match status" value="1"/>
</dbReference>
<comment type="function">
    <text evidence="1">Catalyzes the phosphorylation of riboflavin to FMN followed by the adenylation of FMN to FAD.</text>
</comment>
<comment type="catalytic activity">
    <reaction evidence="1">
        <text>riboflavin + ATP = FMN + ADP + H(+)</text>
        <dbReference type="Rhea" id="RHEA:14357"/>
        <dbReference type="ChEBI" id="CHEBI:15378"/>
        <dbReference type="ChEBI" id="CHEBI:30616"/>
        <dbReference type="ChEBI" id="CHEBI:57986"/>
        <dbReference type="ChEBI" id="CHEBI:58210"/>
        <dbReference type="ChEBI" id="CHEBI:456216"/>
        <dbReference type="EC" id="2.7.1.26"/>
    </reaction>
</comment>
<comment type="catalytic activity">
    <reaction evidence="1">
        <text>FMN + ATP + H(+) = FAD + diphosphate</text>
        <dbReference type="Rhea" id="RHEA:17237"/>
        <dbReference type="ChEBI" id="CHEBI:15378"/>
        <dbReference type="ChEBI" id="CHEBI:30616"/>
        <dbReference type="ChEBI" id="CHEBI:33019"/>
        <dbReference type="ChEBI" id="CHEBI:57692"/>
        <dbReference type="ChEBI" id="CHEBI:58210"/>
        <dbReference type="EC" id="2.7.7.2"/>
    </reaction>
</comment>
<comment type="pathway">
    <text evidence="1">Cofactor biosynthesis; FAD biosynthesis; FAD from FMN: step 1/1.</text>
</comment>
<comment type="pathway">
    <text evidence="1">Cofactor biosynthesis; FMN biosynthesis; FMN from riboflavin (ATP route): step 1/1.</text>
</comment>
<comment type="interaction">
    <interactant intactId="EBI-542969">
        <id>P0AG40</id>
    </interactant>
    <interactant intactId="EBI-542683">
        <id>P0AFG8</id>
        <label>aceE</label>
    </interactant>
    <organismsDiffer>false</organismsDiffer>
    <experiments>2</experiments>
</comment>
<comment type="similarity">
    <text evidence="2">Belongs to the RibF family.</text>
</comment>
<proteinExistence type="evidence at protein level"/>
<keyword id="KW-0067">ATP-binding</keyword>
<keyword id="KW-0274">FAD</keyword>
<keyword id="KW-0285">Flavoprotein</keyword>
<keyword id="KW-0288">FMN</keyword>
<keyword id="KW-0418">Kinase</keyword>
<keyword id="KW-0511">Multifunctional enzyme</keyword>
<keyword id="KW-0547">Nucleotide-binding</keyword>
<keyword id="KW-0548">Nucleotidyltransferase</keyword>
<keyword id="KW-1185">Reference proteome</keyword>
<keyword id="KW-0808">Transferase</keyword>
<protein>
    <recommendedName>
        <fullName evidence="1">Bifunctional riboflavin kinase/FMN adenylyltransferase</fullName>
    </recommendedName>
    <alternativeName>
        <fullName evidence="1">Riboflavin biosynthesis protein RibF</fullName>
    </alternativeName>
    <domain>
        <recommendedName>
            <fullName evidence="1">Riboflavin kinase</fullName>
            <ecNumber evidence="1">2.7.1.26</ecNumber>
        </recommendedName>
        <alternativeName>
            <fullName evidence="1">Flavokinase</fullName>
        </alternativeName>
    </domain>
    <domain>
        <recommendedName>
            <fullName evidence="1">FMN adenylyltransferase</fullName>
            <ecNumber evidence="1">2.7.7.2</ecNumber>
        </recommendedName>
        <alternativeName>
            <fullName evidence="1">FAD pyrophosphorylase</fullName>
        </alternativeName>
        <alternativeName>
            <fullName evidence="1">FAD synthase</fullName>
        </alternativeName>
    </domain>
</protein>
<reference key="1">
    <citation type="journal article" date="1985" name="J. Biol. Chem.">
        <title>Characterization of the ileS-lsp operon in Escherichia coli. Identification of an open reading frame upstream of the ileS gene and potential promoter(s) for the ileS-lsp operon.</title>
        <authorList>
            <person name="Kamio Y."/>
            <person name="Lin C.-K."/>
            <person name="Regue M."/>
            <person name="Wu H.C."/>
        </authorList>
    </citation>
    <scope>NUCLEOTIDE SEQUENCE [GENOMIC DNA]</scope>
</reference>
<reference key="2">
    <citation type="journal article" date="1992" name="Nucleic Acids Res.">
        <title>Systematic sequencing of the Escherichia coli genome: analysis of the 0-2.4 min region.</title>
        <authorList>
            <person name="Yura T."/>
            <person name="Mori H."/>
            <person name="Nagai H."/>
            <person name="Nagata T."/>
            <person name="Ishihama A."/>
            <person name="Fujita N."/>
            <person name="Isono K."/>
            <person name="Mizobuchi K."/>
            <person name="Nakata A."/>
        </authorList>
    </citation>
    <scope>NUCLEOTIDE SEQUENCE [LARGE SCALE GENOMIC DNA]</scope>
    <source>
        <strain>K12</strain>
    </source>
</reference>
<reference key="3">
    <citation type="journal article" date="1997" name="Science">
        <title>The complete genome sequence of Escherichia coli K-12.</title>
        <authorList>
            <person name="Blattner F.R."/>
            <person name="Plunkett G. III"/>
            <person name="Bloch C.A."/>
            <person name="Perna N.T."/>
            <person name="Burland V."/>
            <person name="Riley M."/>
            <person name="Collado-Vides J."/>
            <person name="Glasner J.D."/>
            <person name="Rode C.K."/>
            <person name="Mayhew G.F."/>
            <person name="Gregor J."/>
            <person name="Davis N.W."/>
            <person name="Kirkpatrick H.A."/>
            <person name="Goeden M.A."/>
            <person name="Rose D.J."/>
            <person name="Mau B."/>
            <person name="Shao Y."/>
        </authorList>
    </citation>
    <scope>NUCLEOTIDE SEQUENCE [LARGE SCALE GENOMIC DNA]</scope>
    <source>
        <strain>K12 / MG1655 / ATCC 47076</strain>
    </source>
</reference>
<reference key="4">
    <citation type="journal article" date="2006" name="Mol. Syst. Biol.">
        <title>Highly accurate genome sequences of Escherichia coli K-12 strains MG1655 and W3110.</title>
        <authorList>
            <person name="Hayashi K."/>
            <person name="Morooka N."/>
            <person name="Yamamoto Y."/>
            <person name="Fujita K."/>
            <person name="Isono K."/>
            <person name="Choi S."/>
            <person name="Ohtsubo E."/>
            <person name="Baba T."/>
            <person name="Wanner B.L."/>
            <person name="Mori H."/>
            <person name="Horiuchi T."/>
        </authorList>
    </citation>
    <scope>NUCLEOTIDE SEQUENCE [LARGE SCALE GENOMIC DNA]</scope>
    <scope>SEQUENCE REVISION TO 108; 128-169 AND 214</scope>
    <source>
        <strain>K12 / W3110 / ATCC 27325 / DSM 5911</strain>
    </source>
</reference>
<gene>
    <name type="primary">ribF</name>
    <name type="synonym">yaaC</name>
    <name type="ordered locus">b0025</name>
    <name type="ordered locus">JW0023</name>
</gene>
<evidence type="ECO:0000250" key="1">
    <source>
        <dbReference type="UniProtKB" id="Q59263"/>
    </source>
</evidence>
<evidence type="ECO:0000305" key="2"/>
<feature type="chain" id="PRO_0000194137" description="Bifunctional riboflavin kinase/FMN adenylyltransferase">
    <location>
        <begin position="1"/>
        <end position="313"/>
    </location>
</feature>
<feature type="sequence conflict" description="In Ref. 1; AAA24605 and 2; no nucleotide entry." evidence="2" ref="1 2">
    <original>I</original>
    <variation>V</variation>
    <location>
        <position position="108"/>
    </location>
</feature>
<feature type="sequence conflict" description="In Ref. 1; AAA24605 and 2; no nucleotide entry." evidence="2" ref="1 2">
    <original>RFGAGREGDFLLLQKAGMEYGFDITSTQTFCEGGVRISSTAV</original>
    <variation>PLALVVKAISCYYRKLAWNTASISPVRKLFAEVACASAARL</variation>
    <location>
        <begin position="128"/>
        <end position="169"/>
    </location>
</feature>
<feature type="sequence conflict" description="In Ref. 1; AAA24605 and 2; no nucleotide entry." evidence="2" ref="1 2">
    <original>L</original>
    <variation>P</variation>
    <location>
        <position position="214"/>
    </location>
</feature>
<name>RIBF_ECOLI</name>
<accession>P0AG40</accession>
<accession>P08391</accession>
<accession>P75621</accession>
<organism>
    <name type="scientific">Escherichia coli (strain K12)</name>
    <dbReference type="NCBI Taxonomy" id="83333"/>
    <lineage>
        <taxon>Bacteria</taxon>
        <taxon>Pseudomonadati</taxon>
        <taxon>Pseudomonadota</taxon>
        <taxon>Gammaproteobacteria</taxon>
        <taxon>Enterobacterales</taxon>
        <taxon>Enterobacteriaceae</taxon>
        <taxon>Escherichia</taxon>
    </lineage>
</organism>
<sequence>MKLIRGIHNLSQAPQEGCVLTIGNFDGVHRGHRALLQGLQEEGRKRNLPVMVMLFEPQPLELFATDKAPARLTRLREKLRYLAECGVDYVLCVRFDRRFAALTAQNFISDLLVKHLRVKFLAVGDDFRFGAGREGDFLLLQKAGMEYGFDITSTQTFCEGGVRISSTAVRQALADDNLALAESLLGHPFAISGRVVHGDELGRTIGFPTANVPLRRQVSPVKGVYAVEVLGLGEKPLPGVANIGTRPTVAGIRQQLEVHLLDVAMDLYGRHIQVVLRKKIRNEQRFASLDELKAQIARDELTAREFFGLTKPA</sequence>